<evidence type="ECO:0000255" key="1"/>
<evidence type="ECO:0000256" key="2">
    <source>
        <dbReference type="SAM" id="MobiDB-lite"/>
    </source>
</evidence>
<evidence type="ECO:0000269" key="3">
    <source>
    </source>
</evidence>
<evidence type="ECO:0000303" key="4">
    <source>
    </source>
</evidence>
<name>PEX36_KOMPG</name>
<proteinExistence type="evidence at protein level"/>
<accession>C4QWS8</accession>
<organism>
    <name type="scientific">Komagataella phaffii (strain GS115 / ATCC 20864)</name>
    <name type="common">Yeast</name>
    <name type="synonym">Pichia pastoris</name>
    <dbReference type="NCBI Taxonomy" id="644223"/>
    <lineage>
        <taxon>Eukaryota</taxon>
        <taxon>Fungi</taxon>
        <taxon>Dikarya</taxon>
        <taxon>Ascomycota</taxon>
        <taxon>Saccharomycotina</taxon>
        <taxon>Pichiomycetes</taxon>
        <taxon>Pichiales</taxon>
        <taxon>Pichiaceae</taxon>
        <taxon>Komagataella</taxon>
    </lineage>
</organism>
<sequence>MSNLEKQIRLKNLLESLNGSKSQADLKKESQTLIDIFKQTRQKMIHDQQSNLHPVTSIQGKKLLNLRKALQNHQKHRDNIKVVKTNAEPVSTHDQTVDSNSDSSSSETLIDTSTSSSFDNIKRWLHETNSNESQSKGRPSEYTHVNSPDSGVSSKSGQLSMLTQDSNQILLLIKQLTAKYNMLESFFINSFEQLIALFDNFYFLSSLIGFNTSNSNSKITRLLRNFIKQASKIWLVIIFLTVKNLFIRMIKLNRTEKKVKLERDILMSRSPNSSIQYEYDAMLLTIRTSKISTFLEMLGNVNEFAFYLIQVMNWKVSKKVKNILAGISWIMSIYRMSKDEIQETNPSINNGLKSSDDIIDEYA</sequence>
<feature type="chain" id="PRO_0000461137" description="Peroxin-36">
    <location>
        <begin position="1"/>
        <end position="363"/>
    </location>
</feature>
<feature type="topological domain" description="Cytoplasmic" evidence="3">
    <location>
        <begin position="1"/>
        <end position="193"/>
    </location>
</feature>
<feature type="transmembrane region" description="Helical" evidence="1">
    <location>
        <begin position="194"/>
        <end position="213"/>
    </location>
</feature>
<feature type="topological domain" description="Peroxisomal" evidence="3">
    <location>
        <begin position="214"/>
        <end position="232"/>
    </location>
</feature>
<feature type="transmembrane region" description="Helical" evidence="1">
    <location>
        <begin position="233"/>
        <end position="250"/>
    </location>
</feature>
<feature type="topological domain" description="Cytoplasmic" evidence="3">
    <location>
        <begin position="251"/>
        <end position="363"/>
    </location>
</feature>
<feature type="region of interest" description="Disordered" evidence="2">
    <location>
        <begin position="71"/>
        <end position="114"/>
    </location>
</feature>
<feature type="region of interest" description="Disordered" evidence="2">
    <location>
        <begin position="128"/>
        <end position="157"/>
    </location>
</feature>
<feature type="compositionally biased region" description="Low complexity" evidence="2">
    <location>
        <begin position="97"/>
        <end position="114"/>
    </location>
</feature>
<dbReference type="EMBL" id="FN392319">
    <property type="protein sequence ID" value="CAY67701.1"/>
    <property type="molecule type" value="Genomic_DNA"/>
</dbReference>
<dbReference type="RefSeq" id="XP_002489982.1">
    <property type="nucleotide sequence ID" value="XM_002489937.1"/>
</dbReference>
<dbReference type="SMR" id="C4QWS8"/>
<dbReference type="STRING" id="644223.C4QWS8"/>
<dbReference type="EnsemblFungi" id="CAY67701">
    <property type="protein sequence ID" value="CAY67701"/>
    <property type="gene ID" value="PAS_chr1-1_0326"/>
</dbReference>
<dbReference type="GeneID" id="8196591"/>
<dbReference type="KEGG" id="ppa:PAS_chr1-1_0326"/>
<dbReference type="eggNOG" id="ENOG502T2NA">
    <property type="taxonomic scope" value="Eukaryota"/>
</dbReference>
<dbReference type="HOGENOM" id="CLU_763154_0_0_1"/>
<dbReference type="InParanoid" id="C4QWS8"/>
<dbReference type="OrthoDB" id="3993572at2759"/>
<dbReference type="Proteomes" id="UP000000314">
    <property type="component" value="Chromosome 1"/>
</dbReference>
<dbReference type="GO" id="GO:0005778">
    <property type="term" value="C:peroxisomal membrane"/>
    <property type="evidence" value="ECO:0007669"/>
    <property type="project" value="UniProtKB-SubCell"/>
</dbReference>
<dbReference type="GO" id="GO:0007031">
    <property type="term" value="P:peroxisome organization"/>
    <property type="evidence" value="ECO:0007669"/>
    <property type="project" value="UniProtKB-KW"/>
</dbReference>
<comment type="function">
    <text evidence="3">Controls peroxisome morphology and abundance under conditions of peroxisome proliferation such as oleate and methanol media (PubMed:29037759). Has additional function(s), which is not present in its functional homologs such as Saccharomyces cerevisea PEX34 or human PEX16 (PubMed:29037759).</text>
</comment>
<comment type="subcellular location">
    <subcellularLocation>
        <location evidence="3">Peroxisome membrane</location>
        <topology evidence="1">Multi-pass membrane protein</topology>
    </subcellularLocation>
    <text evidence="3">Traffics to peroxisomes via the ER, where it accumulates in the absence of PEX19.</text>
</comment>
<comment type="disruption phenotype">
    <text evidence="3">Induces pexophagy during peroxisome proliferation conditions (PubMed:29037759). Leads to a delay in peroxisome formation and a serious growth defect in carbon sources requiring peroxisome biogenesis, with an extended lag phase and slow doubling time, at least in methanol medium (PubMed:29037759). Results in less numerous, clustered, and bigger oleate-induced peroxisomes and more numerous, clustered, and smaller methanol-induced peroxisomes (PubMed:29037759).</text>
</comment>
<comment type="miscellaneous">
    <text evidence="4">Has strong predicted structural homology with PEX16 proteins, despite the absence of primary sequence homology.</text>
</comment>
<keyword id="KW-0472">Membrane</keyword>
<keyword id="KW-0576">Peroxisome</keyword>
<keyword id="KW-0962">Peroxisome biogenesis</keyword>
<keyword id="KW-1185">Reference proteome</keyword>
<keyword id="KW-0812">Transmembrane</keyword>
<keyword id="KW-1133">Transmembrane helix</keyword>
<gene>
    <name evidence="4" type="primary">PEX36</name>
    <name type="ordered locus">PAS_chr1-1_0326</name>
</gene>
<reference key="1">
    <citation type="journal article" date="2009" name="Nat. Biotechnol.">
        <title>Genome sequence of the recombinant protein production host Pichia pastoris.</title>
        <authorList>
            <person name="De Schutter K."/>
            <person name="Lin Y.-C."/>
            <person name="Tiels P."/>
            <person name="Van Hecke A."/>
            <person name="Glinka S."/>
            <person name="Weber-Lehmann J."/>
            <person name="Rouze P."/>
            <person name="Van de Peer Y."/>
            <person name="Callewaert N."/>
        </authorList>
    </citation>
    <scope>NUCLEOTIDE SEQUENCE [LARGE SCALE GENOMIC DNA]</scope>
    <source>
        <strain>GS115 / ATCC 20864</strain>
    </source>
</reference>
<reference key="2">
    <citation type="journal article" date="2017" name="J. Mol. Biol.">
        <title>A New Yeast Peroxin, Pex36, a Functional Homolog of Mammalian PEX16, Functions in the ER-to-Peroxisome Traffic of Peroxisomal Membrane Proteins.</title>
        <authorList>
            <person name="Farre J.C."/>
            <person name="Carolino K."/>
            <person name="Stasyk O.V."/>
            <person name="Stasyk O.G."/>
            <person name="Hodzic Z."/>
            <person name="Agrawal G."/>
            <person name="Till A."/>
            <person name="Proietto M."/>
            <person name="Cregg J."/>
            <person name="Sibirny A.A."/>
            <person name="Subramani S."/>
        </authorList>
    </citation>
    <scope>FUNCTION</scope>
    <scope>DISRUPTION PHENOTYPE</scope>
    <scope>SUBCELLULAR LOCATION</scope>
    <scope>TOPOLOGY</scope>
</reference>
<protein>
    <recommendedName>
        <fullName evidence="4">Peroxin-36</fullName>
    </recommendedName>
    <alternativeName>
        <fullName evidence="4">Peroxisomal membrane proteins PEX36</fullName>
        <shortName evidence="4">PMP PEX36</shortName>
    </alternativeName>
</protein>